<protein>
    <recommendedName>
        <fullName evidence="1">Glycerol-1-phosphate dehydrogenase [NAD(P)+]</fullName>
        <shortName evidence="1">G1P dehydrogenase</shortName>
        <shortName evidence="1">G1PDH</shortName>
        <ecNumber evidence="1">1.1.1.261</ecNumber>
    </recommendedName>
    <alternativeName>
        <fullName evidence="1">Enantiomeric glycerophosphate synthase</fullName>
    </alternativeName>
    <alternativeName>
        <fullName evidence="1">sn-glycerol-1-phosphate dehydrogenase</fullName>
    </alternativeName>
</protein>
<evidence type="ECO:0000255" key="1">
    <source>
        <dbReference type="HAMAP-Rule" id="MF_00497"/>
    </source>
</evidence>
<proteinExistence type="inferred from homology"/>
<organism>
    <name type="scientific">Korarchaeum cryptofilum (strain OPF8)</name>
    <dbReference type="NCBI Taxonomy" id="374847"/>
    <lineage>
        <taxon>Archaea</taxon>
        <taxon>Thermoproteota</taxon>
        <taxon>Candidatus Korarchaeia</taxon>
        <taxon>Candidatus Korarchaeales</taxon>
        <taxon>Candidatus Korarchaeaceae</taxon>
        <taxon>Candidatus Korarchaeum</taxon>
    </lineage>
</organism>
<accession>B1L7K1</accession>
<gene>
    <name evidence="1" type="primary">egsA</name>
    <name type="ordered locus">Kcr_0068</name>
</gene>
<name>G1PDH_KORCO</name>
<feature type="chain" id="PRO_0000350647" description="Glycerol-1-phosphate dehydrogenase [NAD(P)+]">
    <location>
        <begin position="1"/>
        <end position="314"/>
    </location>
</feature>
<feature type="binding site" evidence="1">
    <location>
        <begin position="52"/>
        <end position="56"/>
    </location>
    <ligand>
        <name>NAD(+)</name>
        <dbReference type="ChEBI" id="CHEBI:57540"/>
    </ligand>
</feature>
<feature type="binding site" evidence="1">
    <location>
        <begin position="74"/>
        <end position="77"/>
    </location>
    <ligand>
        <name>NAD(+)</name>
        <dbReference type="ChEBI" id="CHEBI:57540"/>
    </ligand>
</feature>
<feature type="binding site" evidence="1">
    <location>
        <position position="79"/>
    </location>
    <ligand>
        <name>substrate</name>
    </ligand>
</feature>
<feature type="binding site" evidence="1">
    <location>
        <position position="83"/>
    </location>
    <ligand>
        <name>NAD(+)</name>
        <dbReference type="ChEBI" id="CHEBI:57540"/>
    </ligand>
</feature>
<feature type="binding site" evidence="1">
    <location>
        <position position="131"/>
    </location>
    <ligand>
        <name>substrate</name>
    </ligand>
</feature>
<feature type="binding site" evidence="1">
    <location>
        <position position="131"/>
    </location>
    <ligand>
        <name>Zn(2+)</name>
        <dbReference type="ChEBI" id="CHEBI:29105"/>
        <note>catalytic</note>
    </ligand>
</feature>
<feature type="binding site" evidence="1">
    <location>
        <position position="211"/>
    </location>
    <ligand>
        <name>Zn(2+)</name>
        <dbReference type="ChEBI" id="CHEBI:29105"/>
        <note>catalytic</note>
    </ligand>
</feature>
<feature type="binding site" evidence="1">
    <location>
        <position position="215"/>
    </location>
    <ligand>
        <name>substrate</name>
    </ligand>
</feature>
<feature type="binding site" evidence="1">
    <location>
        <position position="231"/>
    </location>
    <ligand>
        <name>Zn(2+)</name>
        <dbReference type="ChEBI" id="CHEBI:29105"/>
        <note>catalytic</note>
    </ligand>
</feature>
<comment type="function">
    <text evidence="1">Catalyzes the NAD(P)H-dependent reduction of dihydroxyacetonephosphate (DHAP or glycerone phosphate) to glycerol 1-phosphate (G1P). The G1P thus generated is used as the glycerophosphate backbone of phospholipids in the cellular membranes of Archaea.</text>
</comment>
<comment type="catalytic activity">
    <reaction evidence="1">
        <text>sn-glycerol 1-phosphate + NAD(+) = dihydroxyacetone phosphate + NADH + H(+)</text>
        <dbReference type="Rhea" id="RHEA:21412"/>
        <dbReference type="ChEBI" id="CHEBI:15378"/>
        <dbReference type="ChEBI" id="CHEBI:57540"/>
        <dbReference type="ChEBI" id="CHEBI:57642"/>
        <dbReference type="ChEBI" id="CHEBI:57685"/>
        <dbReference type="ChEBI" id="CHEBI:57945"/>
        <dbReference type="EC" id="1.1.1.261"/>
    </reaction>
</comment>
<comment type="catalytic activity">
    <reaction evidence="1">
        <text>sn-glycerol 1-phosphate + NADP(+) = dihydroxyacetone phosphate + NADPH + H(+)</text>
        <dbReference type="Rhea" id="RHEA:21416"/>
        <dbReference type="ChEBI" id="CHEBI:15378"/>
        <dbReference type="ChEBI" id="CHEBI:57642"/>
        <dbReference type="ChEBI" id="CHEBI:57685"/>
        <dbReference type="ChEBI" id="CHEBI:57783"/>
        <dbReference type="ChEBI" id="CHEBI:58349"/>
        <dbReference type="EC" id="1.1.1.261"/>
    </reaction>
</comment>
<comment type="cofactor">
    <cofactor evidence="1">
        <name>Zn(2+)</name>
        <dbReference type="ChEBI" id="CHEBI:29105"/>
    </cofactor>
    <text evidence="1">Binds 1 zinc ion per subunit.</text>
</comment>
<comment type="pathway">
    <text evidence="1">Membrane lipid metabolism; glycerophospholipid metabolism.</text>
</comment>
<comment type="subcellular location">
    <subcellularLocation>
        <location evidence="1">Cytoplasm</location>
    </subcellularLocation>
</comment>
<comment type="similarity">
    <text evidence="1">Belongs to the glycerol-1-phosphate dehydrogenase family.</text>
</comment>
<sequence>MTRAVAEDLASSLEPDYRILHVLTTGGLEDLMDAIKTARKSEVDLLIGVGGGKPLDITKILAAELGVRYVVVPTSASHDGIASPSVSFTLSREIEERFGRVIRVEAPTAILADTTIINRASPITFKSGFGDLVAKITAVRDWELAYKLRDEPYSEYAASMSLLSAKIAMDHAHEIRTRLEESTRILVKALIGSGVAMSIAGSSRPASGSEHMFSHALDILSSEAGVKPAPHGIQVAIGTIMMAYLQGQDWKMIKEKLIEAGVPTTAEEAGISPDMIVKALTIAHKIRERYTILGSSGLTLSAAEKLARVTGVIK</sequence>
<dbReference type="EC" id="1.1.1.261" evidence="1"/>
<dbReference type="EMBL" id="CP000968">
    <property type="protein sequence ID" value="ACB06828.1"/>
    <property type="molecule type" value="Genomic_DNA"/>
</dbReference>
<dbReference type="SMR" id="B1L7K1"/>
<dbReference type="STRING" id="374847.Kcr_0068"/>
<dbReference type="EnsemblBacteria" id="ACB06828">
    <property type="protein sequence ID" value="ACB06828"/>
    <property type="gene ID" value="Kcr_0068"/>
</dbReference>
<dbReference type="KEGG" id="kcr:Kcr_0068"/>
<dbReference type="eggNOG" id="arCOG00982">
    <property type="taxonomic scope" value="Archaea"/>
</dbReference>
<dbReference type="HOGENOM" id="CLU_038362_0_0_2"/>
<dbReference type="InParanoid" id="B1L7K1"/>
<dbReference type="PhylomeDB" id="B1L7K1"/>
<dbReference type="UniPathway" id="UPA00940"/>
<dbReference type="Proteomes" id="UP000001686">
    <property type="component" value="Chromosome"/>
</dbReference>
<dbReference type="GO" id="GO:0005737">
    <property type="term" value="C:cytoplasm"/>
    <property type="evidence" value="ECO:0007669"/>
    <property type="project" value="UniProtKB-SubCell"/>
</dbReference>
<dbReference type="GO" id="GO:0106357">
    <property type="term" value="F:glycerol-1-phosphate dehydrogenase (NAD+) activity"/>
    <property type="evidence" value="ECO:0007669"/>
    <property type="project" value="RHEA"/>
</dbReference>
<dbReference type="GO" id="GO:0106358">
    <property type="term" value="F:glycerol-1-phosphate dehydrogenase (NADP+) activity"/>
    <property type="evidence" value="ECO:0007669"/>
    <property type="project" value="RHEA"/>
</dbReference>
<dbReference type="GO" id="GO:0046872">
    <property type="term" value="F:metal ion binding"/>
    <property type="evidence" value="ECO:0007669"/>
    <property type="project" value="UniProtKB-KW"/>
</dbReference>
<dbReference type="GO" id="GO:0006650">
    <property type="term" value="P:glycerophospholipid metabolic process"/>
    <property type="evidence" value="ECO:0007669"/>
    <property type="project" value="UniProtKB-UniRule"/>
</dbReference>
<dbReference type="GO" id="GO:0008654">
    <property type="term" value="P:phospholipid biosynthetic process"/>
    <property type="evidence" value="ECO:0007669"/>
    <property type="project" value="UniProtKB-KW"/>
</dbReference>
<dbReference type="Gene3D" id="3.40.50.1970">
    <property type="match status" value="1"/>
</dbReference>
<dbReference type="Gene3D" id="1.20.1090.10">
    <property type="entry name" value="Dehydroquinate synthase-like - alpha domain"/>
    <property type="match status" value="1"/>
</dbReference>
<dbReference type="HAMAP" id="MF_00497_A">
    <property type="entry name" value="G1P_dehydrogenase_A"/>
    <property type="match status" value="1"/>
</dbReference>
<dbReference type="InterPro" id="IPR023002">
    <property type="entry name" value="G1P_dehydrogenase_arc"/>
</dbReference>
<dbReference type="InterPro" id="IPR032837">
    <property type="entry name" value="G1PDH"/>
</dbReference>
<dbReference type="InterPro" id="IPR016205">
    <property type="entry name" value="Glycerol_DH"/>
</dbReference>
<dbReference type="PANTHER" id="PTHR43616">
    <property type="entry name" value="GLYCEROL DEHYDROGENASE"/>
    <property type="match status" value="1"/>
</dbReference>
<dbReference type="PANTHER" id="PTHR43616:SF5">
    <property type="entry name" value="GLYCEROL DEHYDROGENASE 1"/>
    <property type="match status" value="1"/>
</dbReference>
<dbReference type="Pfam" id="PF13685">
    <property type="entry name" value="Fe-ADH_2"/>
    <property type="match status" value="1"/>
</dbReference>
<dbReference type="PIRSF" id="PIRSF000112">
    <property type="entry name" value="Glycerol_dehydrogenase"/>
    <property type="match status" value="1"/>
</dbReference>
<dbReference type="SUPFAM" id="SSF56796">
    <property type="entry name" value="Dehydroquinate synthase-like"/>
    <property type="match status" value="1"/>
</dbReference>
<reference key="1">
    <citation type="journal article" date="2008" name="Proc. Natl. Acad. Sci. U.S.A.">
        <title>A korarchaeal genome reveals new insights into the evolution of the Archaea.</title>
        <authorList>
            <person name="Elkins J.G."/>
            <person name="Podar M."/>
            <person name="Graham D.E."/>
            <person name="Makarova K.S."/>
            <person name="Wolf Y."/>
            <person name="Randau L."/>
            <person name="Hedlund B.P."/>
            <person name="Brochier-Armanet C."/>
            <person name="Kunin V."/>
            <person name="Anderson I."/>
            <person name="Lapidus A."/>
            <person name="Goltsman E."/>
            <person name="Barry K."/>
            <person name="Koonin E.V."/>
            <person name="Hugenholtz P."/>
            <person name="Kyrpides N."/>
            <person name="Wanner G."/>
            <person name="Richardson P."/>
            <person name="Keller M."/>
            <person name="Stetter K.O."/>
        </authorList>
    </citation>
    <scope>NUCLEOTIDE SEQUENCE [LARGE SCALE GENOMIC DNA]</scope>
    <source>
        <strain>OPF8</strain>
    </source>
</reference>
<keyword id="KW-0963">Cytoplasm</keyword>
<keyword id="KW-0444">Lipid biosynthesis</keyword>
<keyword id="KW-0443">Lipid metabolism</keyword>
<keyword id="KW-0479">Metal-binding</keyword>
<keyword id="KW-0520">NAD</keyword>
<keyword id="KW-0521">NADP</keyword>
<keyword id="KW-0560">Oxidoreductase</keyword>
<keyword id="KW-0594">Phospholipid biosynthesis</keyword>
<keyword id="KW-1208">Phospholipid metabolism</keyword>
<keyword id="KW-1185">Reference proteome</keyword>
<keyword id="KW-0862">Zinc</keyword>